<keyword id="KW-0963">Cytoplasm</keyword>
<keyword id="KW-0227">DNA damage</keyword>
<keyword id="KW-0228">DNA excision</keyword>
<keyword id="KW-0234">DNA repair</keyword>
<keyword id="KW-0267">Excision nuclease</keyword>
<keyword id="KW-0742">SOS response</keyword>
<organism>
    <name type="scientific">Borreliella burgdorferi (strain ZS7)</name>
    <name type="common">Borrelia burgdorferi</name>
    <dbReference type="NCBI Taxonomy" id="445985"/>
    <lineage>
        <taxon>Bacteria</taxon>
        <taxon>Pseudomonadati</taxon>
        <taxon>Spirochaetota</taxon>
        <taxon>Spirochaetia</taxon>
        <taxon>Spirochaetales</taxon>
        <taxon>Borreliaceae</taxon>
        <taxon>Borreliella</taxon>
    </lineage>
</organism>
<sequence>MKENLTNLFEKVIKLPTTSGCYKMLNENKKILYIGKAKNLRSRVKSYFLEKNSHKIKILMKNVKSIEVITTNSEYEALLLECNLIKTHKPDYNVKLKDGKGYPMVRITHEKYPRIFKTRKIINDKSEYFGPFTNVKKLDQVLDFINKTFKIRKCKKKSNAPCLYYHMGQCLGVCYKENLEKEYQKELDKAKSILNGNISEISSQIDIKLKHAIQKEDFETAIKLKEIRNSLIEINQIQIVTKTNNLNIDYVHVHPGENVNTIIVLKYRNGKLVERDANFDESICKENELILQFLIQYYTSINMIVPDKIHIFLKDIDTKNVEKLINEIKNTKTEIIYKETEEILKIMEMAISNAELSLREYENKSTKALESLKIVLEMDKLPKIIEGFDIAHLKGQETVASMVTFKMGMPFKENYRLYKLNSLLKGEIDDFKAIKEVISRRYSEIINNNLELPNLILIDGGKGQLNAALSILKGLKIENKVKVCSLAKKQETIFLTTNKKGINLPQGHPALRILQNVRDEAHRKANGFNKKRREKITLLYTKIHGIGEKTAQKILKSIGTYKDILPLSENEISEKIKVNVQLAKRIKEFAIKENSIKNNNQDK</sequence>
<comment type="function">
    <text evidence="1">The UvrABC repair system catalyzes the recognition and processing of DNA lesions. UvrC both incises the 5' and 3' sides of the lesion. The N-terminal half is responsible for the 3' incision and the C-terminal half is responsible for the 5' incision.</text>
</comment>
<comment type="subunit">
    <text evidence="1">Interacts with UvrB in an incision complex.</text>
</comment>
<comment type="subcellular location">
    <subcellularLocation>
        <location evidence="1">Cytoplasm</location>
    </subcellularLocation>
</comment>
<comment type="similarity">
    <text evidence="1">Belongs to the UvrC family.</text>
</comment>
<evidence type="ECO:0000255" key="1">
    <source>
        <dbReference type="HAMAP-Rule" id="MF_00203"/>
    </source>
</evidence>
<protein>
    <recommendedName>
        <fullName evidence="1">UvrABC system protein C</fullName>
        <shortName evidence="1">Protein UvrC</shortName>
    </recommendedName>
    <alternativeName>
        <fullName evidence="1">Excinuclease ABC subunit C</fullName>
    </alternativeName>
</protein>
<proteinExistence type="inferred from homology"/>
<dbReference type="EMBL" id="CP001205">
    <property type="protein sequence ID" value="ACK74967.1"/>
    <property type="molecule type" value="Genomic_DNA"/>
</dbReference>
<dbReference type="RefSeq" id="WP_002657940.1">
    <property type="nucleotide sequence ID" value="NC_011728.1"/>
</dbReference>
<dbReference type="SMR" id="B7J223"/>
<dbReference type="GeneID" id="56567889"/>
<dbReference type="KEGG" id="bbz:BbuZS7_0464"/>
<dbReference type="HOGENOM" id="CLU_014841_3_2_12"/>
<dbReference type="Proteomes" id="UP000006901">
    <property type="component" value="Chromosome"/>
</dbReference>
<dbReference type="GO" id="GO:0005737">
    <property type="term" value="C:cytoplasm"/>
    <property type="evidence" value="ECO:0007669"/>
    <property type="project" value="UniProtKB-SubCell"/>
</dbReference>
<dbReference type="GO" id="GO:0009380">
    <property type="term" value="C:excinuclease repair complex"/>
    <property type="evidence" value="ECO:0007669"/>
    <property type="project" value="InterPro"/>
</dbReference>
<dbReference type="GO" id="GO:0003677">
    <property type="term" value="F:DNA binding"/>
    <property type="evidence" value="ECO:0007669"/>
    <property type="project" value="UniProtKB-UniRule"/>
</dbReference>
<dbReference type="GO" id="GO:0009381">
    <property type="term" value="F:excinuclease ABC activity"/>
    <property type="evidence" value="ECO:0007669"/>
    <property type="project" value="UniProtKB-UniRule"/>
</dbReference>
<dbReference type="GO" id="GO:0006289">
    <property type="term" value="P:nucleotide-excision repair"/>
    <property type="evidence" value="ECO:0007669"/>
    <property type="project" value="UniProtKB-UniRule"/>
</dbReference>
<dbReference type="GO" id="GO:0009432">
    <property type="term" value="P:SOS response"/>
    <property type="evidence" value="ECO:0007669"/>
    <property type="project" value="UniProtKB-UniRule"/>
</dbReference>
<dbReference type="CDD" id="cd10434">
    <property type="entry name" value="GIY-YIG_UvrC_Cho"/>
    <property type="match status" value="1"/>
</dbReference>
<dbReference type="FunFam" id="3.40.1440.10:FF:000001">
    <property type="entry name" value="UvrABC system protein C"/>
    <property type="match status" value="1"/>
</dbReference>
<dbReference type="Gene3D" id="1.10.150.20">
    <property type="entry name" value="5' to 3' exonuclease, C-terminal subdomain"/>
    <property type="match status" value="1"/>
</dbReference>
<dbReference type="Gene3D" id="3.40.1440.10">
    <property type="entry name" value="GIY-YIG endonuclease"/>
    <property type="match status" value="1"/>
</dbReference>
<dbReference type="Gene3D" id="3.30.420.340">
    <property type="entry name" value="UvrC, RNAse H endonuclease domain"/>
    <property type="match status" value="1"/>
</dbReference>
<dbReference type="HAMAP" id="MF_00203">
    <property type="entry name" value="UvrC"/>
    <property type="match status" value="1"/>
</dbReference>
<dbReference type="InterPro" id="IPR000305">
    <property type="entry name" value="GIY-YIG_endonuc"/>
</dbReference>
<dbReference type="InterPro" id="IPR035901">
    <property type="entry name" value="GIY-YIG_endonuc_sf"/>
</dbReference>
<dbReference type="InterPro" id="IPR047296">
    <property type="entry name" value="GIY-YIG_UvrC_Cho"/>
</dbReference>
<dbReference type="InterPro" id="IPR010994">
    <property type="entry name" value="RuvA_2-like"/>
</dbReference>
<dbReference type="InterPro" id="IPR050066">
    <property type="entry name" value="UvrABC_protein_C"/>
</dbReference>
<dbReference type="InterPro" id="IPR004791">
    <property type="entry name" value="UvrC"/>
</dbReference>
<dbReference type="InterPro" id="IPR001162">
    <property type="entry name" value="UvrC_RNase_H_dom"/>
</dbReference>
<dbReference type="InterPro" id="IPR038476">
    <property type="entry name" value="UvrC_RNase_H_dom_sf"/>
</dbReference>
<dbReference type="NCBIfam" id="NF011264">
    <property type="entry name" value="PRK14670.1"/>
    <property type="match status" value="1"/>
</dbReference>
<dbReference type="NCBIfam" id="TIGR00194">
    <property type="entry name" value="uvrC"/>
    <property type="match status" value="1"/>
</dbReference>
<dbReference type="PANTHER" id="PTHR30562:SF1">
    <property type="entry name" value="UVRABC SYSTEM PROTEIN C"/>
    <property type="match status" value="1"/>
</dbReference>
<dbReference type="PANTHER" id="PTHR30562">
    <property type="entry name" value="UVRC/OXIDOREDUCTASE"/>
    <property type="match status" value="1"/>
</dbReference>
<dbReference type="Pfam" id="PF01541">
    <property type="entry name" value="GIY-YIG"/>
    <property type="match status" value="1"/>
</dbReference>
<dbReference type="Pfam" id="PF14520">
    <property type="entry name" value="HHH_5"/>
    <property type="match status" value="1"/>
</dbReference>
<dbReference type="Pfam" id="PF22920">
    <property type="entry name" value="UvrC_RNaseH"/>
    <property type="match status" value="1"/>
</dbReference>
<dbReference type="Pfam" id="PF08459">
    <property type="entry name" value="UvrC_RNaseH_dom"/>
    <property type="match status" value="1"/>
</dbReference>
<dbReference type="SMART" id="SM00465">
    <property type="entry name" value="GIYc"/>
    <property type="match status" value="1"/>
</dbReference>
<dbReference type="SUPFAM" id="SSF82771">
    <property type="entry name" value="GIY-YIG endonuclease"/>
    <property type="match status" value="1"/>
</dbReference>
<dbReference type="SUPFAM" id="SSF47781">
    <property type="entry name" value="RuvA domain 2-like"/>
    <property type="match status" value="1"/>
</dbReference>
<dbReference type="PROSITE" id="PS50164">
    <property type="entry name" value="GIY_YIG"/>
    <property type="match status" value="1"/>
</dbReference>
<dbReference type="PROSITE" id="PS50165">
    <property type="entry name" value="UVRC"/>
    <property type="match status" value="1"/>
</dbReference>
<accession>B7J223</accession>
<feature type="chain" id="PRO_1000200573" description="UvrABC system protein C">
    <location>
        <begin position="1"/>
        <end position="603"/>
    </location>
</feature>
<feature type="domain" description="GIY-YIG" evidence="1">
    <location>
        <begin position="17"/>
        <end position="94"/>
    </location>
</feature>
<reference key="1">
    <citation type="journal article" date="2011" name="J. Bacteriol.">
        <title>Whole-genome sequences of thirteen isolates of Borrelia burgdorferi.</title>
        <authorList>
            <person name="Schutzer S.E."/>
            <person name="Fraser-Liggett C.M."/>
            <person name="Casjens S.R."/>
            <person name="Qiu W.G."/>
            <person name="Dunn J.J."/>
            <person name="Mongodin E.F."/>
            <person name="Luft B.J."/>
        </authorList>
    </citation>
    <scope>NUCLEOTIDE SEQUENCE [LARGE SCALE GENOMIC DNA]</scope>
    <source>
        <strain>ZS7</strain>
    </source>
</reference>
<gene>
    <name evidence="1" type="primary">uvrC</name>
    <name type="ordered locus">BbuZS7_0464</name>
</gene>
<name>UVRC_BORBZ</name>